<sequence length="118" mass="13804">MDLIIQNLEKEYMKKDIPEIWPGDTVRVHYRIVEGDKERIQVYEGVVIAKKHGGIRETITVRKVVQGVGVERIFPLHSPLVEKIEVVRRGRVRRAKLYYLRERKGKAAKIAEREENEG</sequence>
<reference key="1">
    <citation type="journal article" date="2014" name="Genome Announc.">
        <title>Complete Genome Sequence of the Extreme Thermophile Dictyoglomus thermophilum H-6-12.</title>
        <authorList>
            <person name="Coil D.A."/>
            <person name="Badger J.H."/>
            <person name="Forberger H.C."/>
            <person name="Riggs F."/>
            <person name="Madupu R."/>
            <person name="Fedorova N."/>
            <person name="Ward N."/>
            <person name="Robb F.T."/>
            <person name="Eisen J.A."/>
        </authorList>
    </citation>
    <scope>NUCLEOTIDE SEQUENCE [LARGE SCALE GENOMIC DNA]</scope>
    <source>
        <strain>ATCC 35947 / DSM 3960 / H-6-12</strain>
    </source>
</reference>
<name>RL19_DICT6</name>
<dbReference type="EMBL" id="CP001146">
    <property type="protein sequence ID" value="ACI19780.1"/>
    <property type="molecule type" value="Genomic_DNA"/>
</dbReference>
<dbReference type="RefSeq" id="WP_012548412.1">
    <property type="nucleotide sequence ID" value="NC_011297.1"/>
</dbReference>
<dbReference type="SMR" id="B5YFD4"/>
<dbReference type="STRING" id="309799.DICTH_1423"/>
<dbReference type="PaxDb" id="309799-DICTH_1423"/>
<dbReference type="KEGG" id="dth:DICTH_1423"/>
<dbReference type="eggNOG" id="COG0335">
    <property type="taxonomic scope" value="Bacteria"/>
</dbReference>
<dbReference type="HOGENOM" id="CLU_103507_2_1_0"/>
<dbReference type="OrthoDB" id="9803541at2"/>
<dbReference type="Proteomes" id="UP000001733">
    <property type="component" value="Chromosome"/>
</dbReference>
<dbReference type="GO" id="GO:0022625">
    <property type="term" value="C:cytosolic large ribosomal subunit"/>
    <property type="evidence" value="ECO:0007669"/>
    <property type="project" value="TreeGrafter"/>
</dbReference>
<dbReference type="GO" id="GO:0003735">
    <property type="term" value="F:structural constituent of ribosome"/>
    <property type="evidence" value="ECO:0007669"/>
    <property type="project" value="InterPro"/>
</dbReference>
<dbReference type="GO" id="GO:0006412">
    <property type="term" value="P:translation"/>
    <property type="evidence" value="ECO:0007669"/>
    <property type="project" value="UniProtKB-UniRule"/>
</dbReference>
<dbReference type="FunFam" id="2.30.30.790:FF:000001">
    <property type="entry name" value="50S ribosomal protein L19"/>
    <property type="match status" value="1"/>
</dbReference>
<dbReference type="Gene3D" id="2.30.30.790">
    <property type="match status" value="1"/>
</dbReference>
<dbReference type="HAMAP" id="MF_00402">
    <property type="entry name" value="Ribosomal_bL19"/>
    <property type="match status" value="1"/>
</dbReference>
<dbReference type="InterPro" id="IPR001857">
    <property type="entry name" value="Ribosomal_bL19"/>
</dbReference>
<dbReference type="InterPro" id="IPR018257">
    <property type="entry name" value="Ribosomal_bL19_CS"/>
</dbReference>
<dbReference type="InterPro" id="IPR038657">
    <property type="entry name" value="Ribosomal_bL19_sf"/>
</dbReference>
<dbReference type="InterPro" id="IPR008991">
    <property type="entry name" value="Translation_prot_SH3-like_sf"/>
</dbReference>
<dbReference type="NCBIfam" id="TIGR01024">
    <property type="entry name" value="rplS_bact"/>
    <property type="match status" value="1"/>
</dbReference>
<dbReference type="PANTHER" id="PTHR15680:SF9">
    <property type="entry name" value="LARGE RIBOSOMAL SUBUNIT PROTEIN BL19M"/>
    <property type="match status" value="1"/>
</dbReference>
<dbReference type="PANTHER" id="PTHR15680">
    <property type="entry name" value="RIBOSOMAL PROTEIN L19"/>
    <property type="match status" value="1"/>
</dbReference>
<dbReference type="Pfam" id="PF01245">
    <property type="entry name" value="Ribosomal_L19"/>
    <property type="match status" value="1"/>
</dbReference>
<dbReference type="PIRSF" id="PIRSF002191">
    <property type="entry name" value="Ribosomal_L19"/>
    <property type="match status" value="1"/>
</dbReference>
<dbReference type="PRINTS" id="PR00061">
    <property type="entry name" value="RIBOSOMALL19"/>
</dbReference>
<dbReference type="SUPFAM" id="SSF50104">
    <property type="entry name" value="Translation proteins SH3-like domain"/>
    <property type="match status" value="1"/>
</dbReference>
<dbReference type="PROSITE" id="PS01015">
    <property type="entry name" value="RIBOSOMAL_L19"/>
    <property type="match status" value="1"/>
</dbReference>
<gene>
    <name evidence="1" type="primary">rplS</name>
    <name type="ordered locus">DICTH_1423</name>
</gene>
<comment type="function">
    <text evidence="1">This protein is located at the 30S-50S ribosomal subunit interface and may play a role in the structure and function of the aminoacyl-tRNA binding site.</text>
</comment>
<comment type="similarity">
    <text evidence="1">Belongs to the bacterial ribosomal protein bL19 family.</text>
</comment>
<organism>
    <name type="scientific">Dictyoglomus thermophilum (strain ATCC 35947 / DSM 3960 / H-6-12)</name>
    <dbReference type="NCBI Taxonomy" id="309799"/>
    <lineage>
        <taxon>Bacteria</taxon>
        <taxon>Pseudomonadati</taxon>
        <taxon>Dictyoglomota</taxon>
        <taxon>Dictyoglomia</taxon>
        <taxon>Dictyoglomales</taxon>
        <taxon>Dictyoglomaceae</taxon>
        <taxon>Dictyoglomus</taxon>
    </lineage>
</organism>
<protein>
    <recommendedName>
        <fullName evidence="1">Large ribosomal subunit protein bL19</fullName>
    </recommendedName>
    <alternativeName>
        <fullName evidence="2">50S ribosomal protein L19</fullName>
    </alternativeName>
</protein>
<feature type="chain" id="PRO_1000193826" description="Large ribosomal subunit protein bL19">
    <location>
        <begin position="1"/>
        <end position="118"/>
    </location>
</feature>
<proteinExistence type="inferred from homology"/>
<evidence type="ECO:0000255" key="1">
    <source>
        <dbReference type="HAMAP-Rule" id="MF_00402"/>
    </source>
</evidence>
<evidence type="ECO:0000305" key="2"/>
<accession>B5YFD4</accession>
<keyword id="KW-0687">Ribonucleoprotein</keyword>
<keyword id="KW-0689">Ribosomal protein</keyword>